<comment type="function">
    <text evidence="1">Associates with NCBP1/CBP80 to form an alternative cap-binding complex (CBC) which plays a key role in mRNA export. NCBP3 serves as adapter protein linking the capped RNAs (m7GpppG-capped RNA) to NCBP1/CBP80. Unlike the conventional CBC with NCBP2 which binds both small nuclear RNA (snRNA) and messenger (mRNA) and is involved in their export from the nucleus, the alternative CBC with NCBP3 does not bind snRNA and associates only with mRNA thereby playing a role in only mRNA export.</text>
</comment>
<comment type="subunit">
    <text evidence="1">Component of an alternative cap-binding complex (CBC) composed of NCBP1/CBP80 and NCBP3.</text>
</comment>
<comment type="subcellular location">
    <subcellularLocation>
        <location evidence="1">Nucleus</location>
    </subcellularLocation>
    <subcellularLocation>
        <location evidence="1">Cytoplasm</location>
    </subcellularLocation>
</comment>
<comment type="similarity">
    <text evidence="3">Belongs to the NCBP3 family.</text>
</comment>
<gene>
    <name evidence="1" type="primary">ncbp3</name>
</gene>
<organism>
    <name type="scientific">Xenopus tropicalis</name>
    <name type="common">Western clawed frog</name>
    <name type="synonym">Silurana tropicalis</name>
    <dbReference type="NCBI Taxonomy" id="8364"/>
    <lineage>
        <taxon>Eukaryota</taxon>
        <taxon>Metazoa</taxon>
        <taxon>Chordata</taxon>
        <taxon>Craniata</taxon>
        <taxon>Vertebrata</taxon>
        <taxon>Euteleostomi</taxon>
        <taxon>Amphibia</taxon>
        <taxon>Batrachia</taxon>
        <taxon>Anura</taxon>
        <taxon>Pipoidea</taxon>
        <taxon>Pipidae</taxon>
        <taxon>Xenopodinae</taxon>
        <taxon>Xenopus</taxon>
        <taxon>Silurana</taxon>
    </lineage>
</organism>
<feature type="chain" id="PRO_0000308587" description="Nuclear cap-binding protein subunit 3">
    <location>
        <begin position="1"/>
        <end position="611"/>
    </location>
</feature>
<feature type="region of interest" description="Disordered" evidence="2">
    <location>
        <begin position="1"/>
        <end position="44"/>
    </location>
</feature>
<feature type="region of interest" description="RNA recognition motif (RRM) domain" evidence="1">
    <location>
        <begin position="108"/>
        <end position="169"/>
    </location>
</feature>
<feature type="region of interest" description="Disordered" evidence="2">
    <location>
        <begin position="159"/>
        <end position="230"/>
    </location>
</feature>
<feature type="region of interest" description="Disordered" evidence="2">
    <location>
        <begin position="338"/>
        <end position="360"/>
    </location>
</feature>
<feature type="region of interest" description="Disordered" evidence="2">
    <location>
        <begin position="373"/>
        <end position="393"/>
    </location>
</feature>
<feature type="region of interest" description="Disordered" evidence="2">
    <location>
        <begin position="423"/>
        <end position="568"/>
    </location>
</feature>
<feature type="region of interest" description="Disordered" evidence="2">
    <location>
        <begin position="583"/>
        <end position="611"/>
    </location>
</feature>
<feature type="short sequence motif" description="WLDD motif; essential for 7-methylguanosine-containing mRNA cap binding" evidence="1">
    <location>
        <begin position="137"/>
        <end position="140"/>
    </location>
</feature>
<feature type="compositionally biased region" description="Acidic residues" evidence="2">
    <location>
        <begin position="20"/>
        <end position="31"/>
    </location>
</feature>
<feature type="compositionally biased region" description="Basic and acidic residues" evidence="2">
    <location>
        <begin position="168"/>
        <end position="179"/>
    </location>
</feature>
<feature type="compositionally biased region" description="Acidic residues" evidence="2">
    <location>
        <begin position="196"/>
        <end position="218"/>
    </location>
</feature>
<feature type="compositionally biased region" description="Acidic residues" evidence="2">
    <location>
        <begin position="339"/>
        <end position="358"/>
    </location>
</feature>
<feature type="compositionally biased region" description="Polar residues" evidence="2">
    <location>
        <begin position="423"/>
        <end position="439"/>
    </location>
</feature>
<feature type="compositionally biased region" description="Basic and acidic residues" evidence="2">
    <location>
        <begin position="446"/>
        <end position="463"/>
    </location>
</feature>
<feature type="compositionally biased region" description="Low complexity" evidence="2">
    <location>
        <begin position="464"/>
        <end position="475"/>
    </location>
</feature>
<feature type="compositionally biased region" description="Basic and acidic residues" evidence="2">
    <location>
        <begin position="501"/>
        <end position="511"/>
    </location>
</feature>
<feature type="compositionally biased region" description="Basic and acidic residues" evidence="2">
    <location>
        <begin position="544"/>
        <end position="556"/>
    </location>
</feature>
<feature type="compositionally biased region" description="Low complexity" evidence="2">
    <location>
        <begin position="602"/>
        <end position="611"/>
    </location>
</feature>
<keyword id="KW-0963">Cytoplasm</keyword>
<keyword id="KW-0506">mRNA capping</keyword>
<keyword id="KW-0507">mRNA processing</keyword>
<keyword id="KW-0509">mRNA transport</keyword>
<keyword id="KW-0539">Nucleus</keyword>
<keyword id="KW-1185">Reference proteome</keyword>
<keyword id="KW-0694">RNA-binding</keyword>
<keyword id="KW-0813">Transport</keyword>
<protein>
    <recommendedName>
        <fullName evidence="1">Nuclear cap-binding protein subunit 3</fullName>
    </recommendedName>
</protein>
<sequence length="611" mass="69124">MAAVRGLRVSVKAGGGAEPEPMEVEEGEVEAAADRASPREVVSGSNRRYENRAGTFITGIDVTSKEAIEKKEQRAKRFHFRAEVSDQQRNVVLDREMIRKAIPKVRLETLYVYGVDDMSTEDIFAFFKQYPPGYIEWLDDSSCNVVWLDEVTPSRALLNLSSMPTNEKGQRKKDGEHSSARSKKDRLDDSPLSSGDETEEGEVEEDNPSEAEDEDETETEKKSVNPPDTLSEAEQASLLKNELRPSSKPVKGNSLYMRFATKDDKKELGAARRSQYYMKYGNPNYGGMKGILSNSWKRRYHSRRLQRDVIKKSTFIGDDVEITPTYKHLHSGLVNVPEEPIEEEEEEEEEEEDMDEDDRVVVEYRDELQAFKREREGARRSAASNSDSDEMDYDLELKMISTPSPKKSMKMTMYADEVESQLKTIRNSMRSDSVGNSVKSRIGSKSHAEKPADVRLILEEKRQSTASRQQSSSGKSDVRQRLGKRPHSPEIRKTLSIAPTSRREPLSDVHSRLGLPKQLEGKGLYSDSKEKKTGSLWNRLGTAPKDKERPSEKSEKSPAAPEEEDSVLQQAWGALIKEKEQIRQKKSRLDNLPSLQIEISRESSSGSDTDS</sequence>
<dbReference type="EMBL" id="BC076682">
    <property type="protein sequence ID" value="AAH76682.1"/>
    <property type="molecule type" value="mRNA"/>
</dbReference>
<dbReference type="RefSeq" id="NP_001005015.1">
    <property type="nucleotide sequence ID" value="NM_001005015.1"/>
</dbReference>
<dbReference type="SMR" id="Q6DFQ2"/>
<dbReference type="FunCoup" id="Q6DFQ2">
    <property type="interactions" value="3004"/>
</dbReference>
<dbReference type="STRING" id="8364.ENSXETP00000037709"/>
<dbReference type="PaxDb" id="8364-ENSXETP00000028410"/>
<dbReference type="DNASU" id="448518"/>
<dbReference type="GeneID" id="448518"/>
<dbReference type="KEGG" id="xtr:448518"/>
<dbReference type="AGR" id="Xenbase:XB-GENE-5831122"/>
<dbReference type="CTD" id="55421"/>
<dbReference type="Xenbase" id="XB-GENE-5831122">
    <property type="gene designation" value="ncbp3"/>
</dbReference>
<dbReference type="eggNOG" id="ENOG502QRX4">
    <property type="taxonomic scope" value="Eukaryota"/>
</dbReference>
<dbReference type="InParanoid" id="Q6DFQ2"/>
<dbReference type="OMA" id="QYSRPRP"/>
<dbReference type="OrthoDB" id="422106at2759"/>
<dbReference type="Proteomes" id="UP000008143">
    <property type="component" value="Chromosome 2"/>
</dbReference>
<dbReference type="GO" id="GO:0005737">
    <property type="term" value="C:cytoplasm"/>
    <property type="evidence" value="ECO:0000250"/>
    <property type="project" value="UniProtKB"/>
</dbReference>
<dbReference type="GO" id="GO:0005634">
    <property type="term" value="C:nucleus"/>
    <property type="evidence" value="ECO:0000250"/>
    <property type="project" value="UniProtKB"/>
</dbReference>
<dbReference type="GO" id="GO:0003729">
    <property type="term" value="F:mRNA binding"/>
    <property type="evidence" value="ECO:0000250"/>
    <property type="project" value="UniProtKB"/>
</dbReference>
<dbReference type="GO" id="GO:0000340">
    <property type="term" value="F:RNA 7-methylguanosine cap binding"/>
    <property type="evidence" value="ECO:0000250"/>
    <property type="project" value="UniProtKB"/>
</dbReference>
<dbReference type="GO" id="GO:0006370">
    <property type="term" value="P:7-methylguanosine mRNA capping"/>
    <property type="evidence" value="ECO:0007669"/>
    <property type="project" value="UniProtKB-KW"/>
</dbReference>
<dbReference type="GO" id="GO:0051028">
    <property type="term" value="P:mRNA transport"/>
    <property type="evidence" value="ECO:0007669"/>
    <property type="project" value="UniProtKB-KW"/>
</dbReference>
<dbReference type="InterPro" id="IPR019416">
    <property type="entry name" value="NCBP3"/>
</dbReference>
<dbReference type="PANTHER" id="PTHR16291">
    <property type="entry name" value="NUCLEAR CAP-BINDING PROTEIN SUBUNIT 3"/>
    <property type="match status" value="1"/>
</dbReference>
<dbReference type="PANTHER" id="PTHR16291:SF0">
    <property type="entry name" value="NUCLEAR CAP-BINDING PROTEIN SUBUNIT 3"/>
    <property type="match status" value="1"/>
</dbReference>
<dbReference type="Pfam" id="PF10309">
    <property type="entry name" value="NCBP3"/>
    <property type="match status" value="1"/>
</dbReference>
<name>NCBP3_XENTR</name>
<accession>Q6DFQ2</accession>
<evidence type="ECO:0000250" key="1">
    <source>
        <dbReference type="UniProtKB" id="Q53F19"/>
    </source>
</evidence>
<evidence type="ECO:0000256" key="2">
    <source>
        <dbReference type="SAM" id="MobiDB-lite"/>
    </source>
</evidence>
<evidence type="ECO:0000305" key="3"/>
<proteinExistence type="evidence at transcript level"/>
<reference key="1">
    <citation type="submission" date="2004-07" db="EMBL/GenBank/DDBJ databases">
        <authorList>
            <consortium name="NIH - Xenopus Gene Collection (XGC) project"/>
        </authorList>
    </citation>
    <scope>NUCLEOTIDE SEQUENCE [LARGE SCALE MRNA]</scope>
    <source>
        <tissue>Embryo</tissue>
    </source>
</reference>